<organism>
    <name type="scientific">Burkholderia ambifaria (strain ATCC BAA-244 / DSM 16087 / CCUG 44356 / LMG 19182 / AMMD)</name>
    <name type="common">Burkholderia cepacia (strain AMMD)</name>
    <dbReference type="NCBI Taxonomy" id="339670"/>
    <lineage>
        <taxon>Bacteria</taxon>
        <taxon>Pseudomonadati</taxon>
        <taxon>Pseudomonadota</taxon>
        <taxon>Betaproteobacteria</taxon>
        <taxon>Burkholderiales</taxon>
        <taxon>Burkholderiaceae</taxon>
        <taxon>Burkholderia</taxon>
        <taxon>Burkholderia cepacia complex</taxon>
    </lineage>
</organism>
<reference key="1">
    <citation type="submission" date="2006-08" db="EMBL/GenBank/DDBJ databases">
        <title>Complete sequence of chromosome 1 of Burkholderia cepacia AMMD.</title>
        <authorList>
            <person name="Copeland A."/>
            <person name="Lucas S."/>
            <person name="Lapidus A."/>
            <person name="Barry K."/>
            <person name="Detter J.C."/>
            <person name="Glavina del Rio T."/>
            <person name="Hammon N."/>
            <person name="Israni S."/>
            <person name="Pitluck S."/>
            <person name="Bruce D."/>
            <person name="Chain P."/>
            <person name="Malfatti S."/>
            <person name="Shin M."/>
            <person name="Vergez L."/>
            <person name="Schmutz J."/>
            <person name="Larimer F."/>
            <person name="Land M."/>
            <person name="Hauser L."/>
            <person name="Kyrpides N."/>
            <person name="Kim E."/>
            <person name="Parke J."/>
            <person name="Coenye T."/>
            <person name="Konstantinidis K."/>
            <person name="Ramette A."/>
            <person name="Tiedje J."/>
            <person name="Richardson P."/>
        </authorList>
    </citation>
    <scope>NUCLEOTIDE SEQUENCE [LARGE SCALE GENOMIC DNA]</scope>
    <source>
        <strain>ATCC BAA-244 / DSM 16087 / CCUG 44356 / LMG 19182 / AMMD</strain>
    </source>
</reference>
<sequence>MIETDKLAAERIIAATPTSSHEEVFERALRPRQLDDYVGQEKVRGQLEIFIEAAKRRSEPLDHVLLFGPPGLGKTTLAHIIAREMGVNLRQTSGPVLERAGDLAALLTNLEANDVLFIDEIHRLSPVVEEILYPALEDYQIDIMIGEGPAARSVKLDLQPFTLVGATTRAGMLTNPLRDRFGIVARLEFYDADQLARIVRRSASLLNAHIDPSGALEIAKRSRGTPRIANRLLRRVRDFAEVKADGQITAAVADAALAMLDVDPVGFDLMDRKLLEAILHKFDGGPVGIDNLAAAIGEERDTIEDVLEPYLIQQGFLQRTPRGRVATLLTYRHFGLSAPDAGNAERGMWDTPAGK</sequence>
<accession>Q0BI83</accession>
<dbReference type="EC" id="3.6.4.-" evidence="1"/>
<dbReference type="EMBL" id="CP000440">
    <property type="protein sequence ID" value="ABI86140.1"/>
    <property type="molecule type" value="Genomic_DNA"/>
</dbReference>
<dbReference type="RefSeq" id="WP_011655983.1">
    <property type="nucleotide sequence ID" value="NC_008390.1"/>
</dbReference>
<dbReference type="SMR" id="Q0BI83"/>
<dbReference type="GeneID" id="93084003"/>
<dbReference type="KEGG" id="bam:Bamb_0581"/>
<dbReference type="PATRIC" id="fig|339670.21.peg.1016"/>
<dbReference type="eggNOG" id="COG2255">
    <property type="taxonomic scope" value="Bacteria"/>
</dbReference>
<dbReference type="Proteomes" id="UP000000662">
    <property type="component" value="Chromosome 1"/>
</dbReference>
<dbReference type="GO" id="GO:0005737">
    <property type="term" value="C:cytoplasm"/>
    <property type="evidence" value="ECO:0007669"/>
    <property type="project" value="UniProtKB-SubCell"/>
</dbReference>
<dbReference type="GO" id="GO:0048476">
    <property type="term" value="C:Holliday junction resolvase complex"/>
    <property type="evidence" value="ECO:0007669"/>
    <property type="project" value="UniProtKB-UniRule"/>
</dbReference>
<dbReference type="GO" id="GO:0005524">
    <property type="term" value="F:ATP binding"/>
    <property type="evidence" value="ECO:0007669"/>
    <property type="project" value="UniProtKB-UniRule"/>
</dbReference>
<dbReference type="GO" id="GO:0016887">
    <property type="term" value="F:ATP hydrolysis activity"/>
    <property type="evidence" value="ECO:0007669"/>
    <property type="project" value="InterPro"/>
</dbReference>
<dbReference type="GO" id="GO:0000400">
    <property type="term" value="F:four-way junction DNA binding"/>
    <property type="evidence" value="ECO:0007669"/>
    <property type="project" value="UniProtKB-UniRule"/>
</dbReference>
<dbReference type="GO" id="GO:0009378">
    <property type="term" value="F:four-way junction helicase activity"/>
    <property type="evidence" value="ECO:0007669"/>
    <property type="project" value="InterPro"/>
</dbReference>
<dbReference type="GO" id="GO:0006310">
    <property type="term" value="P:DNA recombination"/>
    <property type="evidence" value="ECO:0007669"/>
    <property type="project" value="UniProtKB-UniRule"/>
</dbReference>
<dbReference type="GO" id="GO:0006281">
    <property type="term" value="P:DNA repair"/>
    <property type="evidence" value="ECO:0007669"/>
    <property type="project" value="UniProtKB-UniRule"/>
</dbReference>
<dbReference type="CDD" id="cd00009">
    <property type="entry name" value="AAA"/>
    <property type="match status" value="1"/>
</dbReference>
<dbReference type="FunFam" id="1.10.10.10:FF:000086">
    <property type="entry name" value="Holliday junction ATP-dependent DNA helicase RuvB"/>
    <property type="match status" value="1"/>
</dbReference>
<dbReference type="FunFam" id="1.10.8.60:FF:000023">
    <property type="entry name" value="Holliday junction ATP-dependent DNA helicase RuvB"/>
    <property type="match status" value="1"/>
</dbReference>
<dbReference type="FunFam" id="3.40.50.300:FF:000073">
    <property type="entry name" value="Holliday junction ATP-dependent DNA helicase RuvB"/>
    <property type="match status" value="1"/>
</dbReference>
<dbReference type="Gene3D" id="1.10.8.60">
    <property type="match status" value="1"/>
</dbReference>
<dbReference type="Gene3D" id="3.40.50.300">
    <property type="entry name" value="P-loop containing nucleotide triphosphate hydrolases"/>
    <property type="match status" value="1"/>
</dbReference>
<dbReference type="Gene3D" id="1.10.10.10">
    <property type="entry name" value="Winged helix-like DNA-binding domain superfamily/Winged helix DNA-binding domain"/>
    <property type="match status" value="1"/>
</dbReference>
<dbReference type="HAMAP" id="MF_00016">
    <property type="entry name" value="DNA_HJ_migration_RuvB"/>
    <property type="match status" value="1"/>
</dbReference>
<dbReference type="InterPro" id="IPR003593">
    <property type="entry name" value="AAA+_ATPase"/>
</dbReference>
<dbReference type="InterPro" id="IPR041445">
    <property type="entry name" value="AAA_lid_4"/>
</dbReference>
<dbReference type="InterPro" id="IPR004605">
    <property type="entry name" value="DNA_helicase_Holl-junc_RuvB"/>
</dbReference>
<dbReference type="InterPro" id="IPR027417">
    <property type="entry name" value="P-loop_NTPase"/>
</dbReference>
<dbReference type="InterPro" id="IPR008824">
    <property type="entry name" value="RuvB-like_N"/>
</dbReference>
<dbReference type="InterPro" id="IPR008823">
    <property type="entry name" value="RuvB_C"/>
</dbReference>
<dbReference type="InterPro" id="IPR036388">
    <property type="entry name" value="WH-like_DNA-bd_sf"/>
</dbReference>
<dbReference type="InterPro" id="IPR036390">
    <property type="entry name" value="WH_DNA-bd_sf"/>
</dbReference>
<dbReference type="NCBIfam" id="NF000868">
    <property type="entry name" value="PRK00080.1"/>
    <property type="match status" value="1"/>
</dbReference>
<dbReference type="NCBIfam" id="TIGR00635">
    <property type="entry name" value="ruvB"/>
    <property type="match status" value="1"/>
</dbReference>
<dbReference type="PANTHER" id="PTHR42848">
    <property type="match status" value="1"/>
</dbReference>
<dbReference type="PANTHER" id="PTHR42848:SF1">
    <property type="entry name" value="HOLLIDAY JUNCTION BRANCH MIGRATION COMPLEX SUBUNIT RUVB"/>
    <property type="match status" value="1"/>
</dbReference>
<dbReference type="Pfam" id="PF17864">
    <property type="entry name" value="AAA_lid_4"/>
    <property type="match status" value="1"/>
</dbReference>
<dbReference type="Pfam" id="PF05491">
    <property type="entry name" value="RuvB_C"/>
    <property type="match status" value="1"/>
</dbReference>
<dbReference type="Pfam" id="PF05496">
    <property type="entry name" value="RuvB_N"/>
    <property type="match status" value="1"/>
</dbReference>
<dbReference type="SMART" id="SM00382">
    <property type="entry name" value="AAA"/>
    <property type="match status" value="1"/>
</dbReference>
<dbReference type="SUPFAM" id="SSF52540">
    <property type="entry name" value="P-loop containing nucleoside triphosphate hydrolases"/>
    <property type="match status" value="1"/>
</dbReference>
<dbReference type="SUPFAM" id="SSF46785">
    <property type="entry name" value="Winged helix' DNA-binding domain"/>
    <property type="match status" value="1"/>
</dbReference>
<protein>
    <recommendedName>
        <fullName evidence="1">Holliday junction branch migration complex subunit RuvB</fullName>
        <ecNumber evidence="1">3.6.4.-</ecNumber>
    </recommendedName>
</protein>
<comment type="function">
    <text evidence="1">The RuvA-RuvB-RuvC complex processes Holliday junction (HJ) DNA during genetic recombination and DNA repair, while the RuvA-RuvB complex plays an important role in the rescue of blocked DNA replication forks via replication fork reversal (RFR). RuvA specifically binds to HJ cruciform DNA, conferring on it an open structure. The RuvB hexamer acts as an ATP-dependent pump, pulling dsDNA into and through the RuvAB complex. RuvB forms 2 homohexamers on either side of HJ DNA bound by 1 or 2 RuvA tetramers; 4 subunits per hexamer contact DNA at a time. Coordinated motions by a converter formed by DNA-disengaged RuvB subunits stimulates ATP hydrolysis and nucleotide exchange. Immobilization of the converter enables RuvB to convert the ATP-contained energy into a lever motion, pulling 2 nucleotides of DNA out of the RuvA tetramer per ATP hydrolyzed, thus driving DNA branch migration. The RuvB motors rotate together with the DNA substrate, which together with the progressing nucleotide cycle form the mechanistic basis for DNA recombination by continuous HJ branch migration. Branch migration allows RuvC to scan DNA until it finds its consensus sequence, where it cleaves and resolves cruciform DNA.</text>
</comment>
<comment type="catalytic activity">
    <reaction evidence="1">
        <text>ATP + H2O = ADP + phosphate + H(+)</text>
        <dbReference type="Rhea" id="RHEA:13065"/>
        <dbReference type="ChEBI" id="CHEBI:15377"/>
        <dbReference type="ChEBI" id="CHEBI:15378"/>
        <dbReference type="ChEBI" id="CHEBI:30616"/>
        <dbReference type="ChEBI" id="CHEBI:43474"/>
        <dbReference type="ChEBI" id="CHEBI:456216"/>
    </reaction>
</comment>
<comment type="subunit">
    <text evidence="1">Homohexamer. Forms an RuvA(8)-RuvB(12)-Holliday junction (HJ) complex. HJ DNA is sandwiched between 2 RuvA tetramers; dsDNA enters through RuvA and exits via RuvB. An RuvB hexamer assembles on each DNA strand where it exits the tetramer. Each RuvB hexamer is contacted by two RuvA subunits (via domain III) on 2 adjacent RuvB subunits; this complex drives branch migration. In the full resolvosome a probable DNA-RuvA(4)-RuvB(12)-RuvC(2) complex forms which resolves the HJ.</text>
</comment>
<comment type="subcellular location">
    <subcellularLocation>
        <location evidence="1">Cytoplasm</location>
    </subcellularLocation>
</comment>
<comment type="domain">
    <text evidence="1">Has 3 domains, the large (RuvB-L) and small ATPase (RuvB-S) domains and the C-terminal head (RuvB-H) domain. The head domain binds DNA, while the ATPase domains jointly bind ATP, ADP or are empty depending on the state of the subunit in the translocation cycle. During a single DNA translocation step the structure of each domain remains the same, but their relative positions change.</text>
</comment>
<comment type="similarity">
    <text evidence="1">Belongs to the RuvB family.</text>
</comment>
<gene>
    <name evidence="1" type="primary">ruvB</name>
    <name type="ordered locus">Bamb_0581</name>
</gene>
<feature type="chain" id="PRO_1000001370" description="Holliday junction branch migration complex subunit RuvB">
    <location>
        <begin position="1"/>
        <end position="355"/>
    </location>
</feature>
<feature type="region of interest" description="Large ATPase domain (RuvB-L)" evidence="1">
    <location>
        <begin position="4"/>
        <end position="190"/>
    </location>
</feature>
<feature type="region of interest" description="Small ATPAse domain (RuvB-S)" evidence="1">
    <location>
        <begin position="191"/>
        <end position="261"/>
    </location>
</feature>
<feature type="region of interest" description="Head domain (RuvB-H)" evidence="1">
    <location>
        <begin position="264"/>
        <end position="355"/>
    </location>
</feature>
<feature type="binding site" evidence="1">
    <location>
        <position position="29"/>
    </location>
    <ligand>
        <name>ATP</name>
        <dbReference type="ChEBI" id="CHEBI:30616"/>
    </ligand>
</feature>
<feature type="binding site" evidence="1">
    <location>
        <position position="30"/>
    </location>
    <ligand>
        <name>ATP</name>
        <dbReference type="ChEBI" id="CHEBI:30616"/>
    </ligand>
</feature>
<feature type="binding site" evidence="1">
    <location>
        <position position="71"/>
    </location>
    <ligand>
        <name>ATP</name>
        <dbReference type="ChEBI" id="CHEBI:30616"/>
    </ligand>
</feature>
<feature type="binding site" evidence="1">
    <location>
        <position position="74"/>
    </location>
    <ligand>
        <name>ATP</name>
        <dbReference type="ChEBI" id="CHEBI:30616"/>
    </ligand>
</feature>
<feature type="binding site" evidence="1">
    <location>
        <position position="75"/>
    </location>
    <ligand>
        <name>ATP</name>
        <dbReference type="ChEBI" id="CHEBI:30616"/>
    </ligand>
</feature>
<feature type="binding site" evidence="1">
    <location>
        <position position="75"/>
    </location>
    <ligand>
        <name>Mg(2+)</name>
        <dbReference type="ChEBI" id="CHEBI:18420"/>
    </ligand>
</feature>
<feature type="binding site" evidence="1">
    <location>
        <position position="76"/>
    </location>
    <ligand>
        <name>ATP</name>
        <dbReference type="ChEBI" id="CHEBI:30616"/>
    </ligand>
</feature>
<feature type="binding site" evidence="1">
    <location>
        <begin position="137"/>
        <end position="139"/>
    </location>
    <ligand>
        <name>ATP</name>
        <dbReference type="ChEBI" id="CHEBI:30616"/>
    </ligand>
</feature>
<feature type="binding site" evidence="1">
    <location>
        <position position="180"/>
    </location>
    <ligand>
        <name>ATP</name>
        <dbReference type="ChEBI" id="CHEBI:30616"/>
    </ligand>
</feature>
<feature type="binding site" evidence="1">
    <location>
        <position position="190"/>
    </location>
    <ligand>
        <name>ATP</name>
        <dbReference type="ChEBI" id="CHEBI:30616"/>
    </ligand>
</feature>
<feature type="binding site" evidence="1">
    <location>
        <position position="227"/>
    </location>
    <ligand>
        <name>ATP</name>
        <dbReference type="ChEBI" id="CHEBI:30616"/>
    </ligand>
</feature>
<feature type="binding site" evidence="1">
    <location>
        <position position="300"/>
    </location>
    <ligand>
        <name>DNA</name>
        <dbReference type="ChEBI" id="CHEBI:16991"/>
    </ligand>
</feature>
<feature type="binding site" evidence="1">
    <location>
        <position position="319"/>
    </location>
    <ligand>
        <name>DNA</name>
        <dbReference type="ChEBI" id="CHEBI:16991"/>
    </ligand>
</feature>
<feature type="binding site" evidence="1">
    <location>
        <position position="324"/>
    </location>
    <ligand>
        <name>DNA</name>
        <dbReference type="ChEBI" id="CHEBI:16991"/>
    </ligand>
</feature>
<keyword id="KW-0067">ATP-binding</keyword>
<keyword id="KW-0963">Cytoplasm</keyword>
<keyword id="KW-0227">DNA damage</keyword>
<keyword id="KW-0233">DNA recombination</keyword>
<keyword id="KW-0234">DNA repair</keyword>
<keyword id="KW-0238">DNA-binding</keyword>
<keyword id="KW-0378">Hydrolase</keyword>
<keyword id="KW-0547">Nucleotide-binding</keyword>
<evidence type="ECO:0000255" key="1">
    <source>
        <dbReference type="HAMAP-Rule" id="MF_00016"/>
    </source>
</evidence>
<name>RUVB_BURCM</name>
<proteinExistence type="inferred from homology"/>